<accession>Q6GE75</accession>
<feature type="chain" id="PRO_0000270130" description="Putative hemin import ATP-binding protein HrtA">
    <location>
        <begin position="1"/>
        <end position="221"/>
    </location>
</feature>
<feature type="domain" description="ABC transporter" evidence="2">
    <location>
        <begin position="3"/>
        <end position="221"/>
    </location>
</feature>
<feature type="binding site" evidence="2">
    <location>
        <begin position="39"/>
        <end position="46"/>
    </location>
    <ligand>
        <name>ATP</name>
        <dbReference type="ChEBI" id="CHEBI:30616"/>
    </ligand>
</feature>
<comment type="function">
    <text evidence="1">Part of the ABC transporter complex hrt involved in hemin import. Responsible for energy coupling to the transport system (By similarity).</text>
</comment>
<comment type="subunit">
    <text evidence="1">The complex is composed of two ATP-binding proteins (HrtA), two transmembrane proteins (HrtB) and a solute-binding protein.</text>
</comment>
<comment type="subcellular location">
    <subcellularLocation>
        <location evidence="3">Cell membrane</location>
        <topology evidence="3">Peripheral membrane protein</topology>
    </subcellularLocation>
</comment>
<comment type="similarity">
    <text evidence="3">Belongs to the ABC transporter superfamily. HrtA family.</text>
</comment>
<reference key="1">
    <citation type="journal article" date="2004" name="Proc. Natl. Acad. Sci. U.S.A.">
        <title>Complete genomes of two clinical Staphylococcus aureus strains: evidence for the rapid evolution of virulence and drug resistance.</title>
        <authorList>
            <person name="Holden M.T.G."/>
            <person name="Feil E.J."/>
            <person name="Lindsay J.A."/>
            <person name="Peacock S.J."/>
            <person name="Day N.P.J."/>
            <person name="Enright M.C."/>
            <person name="Foster T.J."/>
            <person name="Moore C.E."/>
            <person name="Hurst L."/>
            <person name="Atkin R."/>
            <person name="Barron A."/>
            <person name="Bason N."/>
            <person name="Bentley S.D."/>
            <person name="Chillingworth C."/>
            <person name="Chillingworth T."/>
            <person name="Churcher C."/>
            <person name="Clark L."/>
            <person name="Corton C."/>
            <person name="Cronin A."/>
            <person name="Doggett J."/>
            <person name="Dowd L."/>
            <person name="Feltwell T."/>
            <person name="Hance Z."/>
            <person name="Harris B."/>
            <person name="Hauser H."/>
            <person name="Holroyd S."/>
            <person name="Jagels K."/>
            <person name="James K.D."/>
            <person name="Lennard N."/>
            <person name="Line A."/>
            <person name="Mayes R."/>
            <person name="Moule S."/>
            <person name="Mungall K."/>
            <person name="Ormond D."/>
            <person name="Quail M.A."/>
            <person name="Rabbinowitsch E."/>
            <person name="Rutherford K.M."/>
            <person name="Sanders M."/>
            <person name="Sharp S."/>
            <person name="Simmonds M."/>
            <person name="Stevens K."/>
            <person name="Whitehead S."/>
            <person name="Barrell B.G."/>
            <person name="Spratt B.G."/>
            <person name="Parkhill J."/>
        </authorList>
    </citation>
    <scope>NUCLEOTIDE SEQUENCE [LARGE SCALE GENOMIC DNA]</scope>
    <source>
        <strain>MRSA252</strain>
    </source>
</reference>
<keyword id="KW-0067">ATP-binding</keyword>
<keyword id="KW-1003">Cell membrane</keyword>
<keyword id="KW-0472">Membrane</keyword>
<keyword id="KW-0547">Nucleotide-binding</keyword>
<keyword id="KW-1278">Translocase</keyword>
<keyword id="KW-0813">Transport</keyword>
<sequence>MALVVKDIVKNFGEGLSETKVLKGINFEVEQGEFVILNGASGSGKTTLLTILGGLLSQTSGTVLYNDAPLFDKQHRSSDLRLEDIGFIFQSSHLVPYLKVIEQLTLVGQEAGMTKQQSSKRAIQLLKNIGLEDRLNVYPHQLSGGEKQRVAIMRAFMNNPKIILADEPTASLDADRATKVVEMIRQQIKEQQMIGIMITHDRRLFEYADRVIELEDGKITD</sequence>
<organism>
    <name type="scientific">Staphylococcus aureus (strain MRSA252)</name>
    <dbReference type="NCBI Taxonomy" id="282458"/>
    <lineage>
        <taxon>Bacteria</taxon>
        <taxon>Bacillati</taxon>
        <taxon>Bacillota</taxon>
        <taxon>Bacilli</taxon>
        <taxon>Bacillales</taxon>
        <taxon>Staphylococcaceae</taxon>
        <taxon>Staphylococcus</taxon>
    </lineage>
</organism>
<protein>
    <recommendedName>
        <fullName>Putative hemin import ATP-binding protein HrtA</fullName>
        <ecNumber>7.6.2.-</ecNumber>
    </recommendedName>
</protein>
<evidence type="ECO:0000250" key="1"/>
<evidence type="ECO:0000255" key="2">
    <source>
        <dbReference type="PROSITE-ProRule" id="PRU00434"/>
    </source>
</evidence>
<evidence type="ECO:0000305" key="3"/>
<proteinExistence type="inferred from homology"/>
<name>HRTA_STAAR</name>
<gene>
    <name type="primary">hrtA</name>
    <name type="ordered locus">SAR2445</name>
</gene>
<dbReference type="EC" id="7.6.2.-"/>
<dbReference type="EMBL" id="BX571856">
    <property type="protein sequence ID" value="CAG41427.1"/>
    <property type="molecule type" value="Genomic_DNA"/>
</dbReference>
<dbReference type="RefSeq" id="WP_001229922.1">
    <property type="nucleotide sequence ID" value="NC_002952.2"/>
</dbReference>
<dbReference type="SMR" id="Q6GE75"/>
<dbReference type="KEGG" id="sar:SAR2445"/>
<dbReference type="HOGENOM" id="CLU_000604_1_22_9"/>
<dbReference type="Proteomes" id="UP000000596">
    <property type="component" value="Chromosome"/>
</dbReference>
<dbReference type="GO" id="GO:0005886">
    <property type="term" value="C:plasma membrane"/>
    <property type="evidence" value="ECO:0007669"/>
    <property type="project" value="UniProtKB-SubCell"/>
</dbReference>
<dbReference type="GO" id="GO:0005524">
    <property type="term" value="F:ATP binding"/>
    <property type="evidence" value="ECO:0007669"/>
    <property type="project" value="UniProtKB-KW"/>
</dbReference>
<dbReference type="GO" id="GO:0016887">
    <property type="term" value="F:ATP hydrolysis activity"/>
    <property type="evidence" value="ECO:0007669"/>
    <property type="project" value="InterPro"/>
</dbReference>
<dbReference type="GO" id="GO:0022857">
    <property type="term" value="F:transmembrane transporter activity"/>
    <property type="evidence" value="ECO:0007669"/>
    <property type="project" value="TreeGrafter"/>
</dbReference>
<dbReference type="CDD" id="cd03255">
    <property type="entry name" value="ABC_MJ0796_LolCDE_FtsE"/>
    <property type="match status" value="1"/>
</dbReference>
<dbReference type="FunFam" id="3.40.50.300:FF:000032">
    <property type="entry name" value="Export ABC transporter ATP-binding protein"/>
    <property type="match status" value="1"/>
</dbReference>
<dbReference type="Gene3D" id="3.40.50.300">
    <property type="entry name" value="P-loop containing nucleotide triphosphate hydrolases"/>
    <property type="match status" value="1"/>
</dbReference>
<dbReference type="InterPro" id="IPR003593">
    <property type="entry name" value="AAA+_ATPase"/>
</dbReference>
<dbReference type="InterPro" id="IPR003439">
    <property type="entry name" value="ABC_transporter-like_ATP-bd"/>
</dbReference>
<dbReference type="InterPro" id="IPR015854">
    <property type="entry name" value="ABC_transpr_LolD-like"/>
</dbReference>
<dbReference type="InterPro" id="IPR017911">
    <property type="entry name" value="MacB-like_ATP-bd"/>
</dbReference>
<dbReference type="InterPro" id="IPR027417">
    <property type="entry name" value="P-loop_NTPase"/>
</dbReference>
<dbReference type="PANTHER" id="PTHR24220:SF666">
    <property type="entry name" value="HEMIN IMPORT ATP-BINDING PROTEIN HRTA-RELATED"/>
    <property type="match status" value="1"/>
</dbReference>
<dbReference type="PANTHER" id="PTHR24220">
    <property type="entry name" value="IMPORT ATP-BINDING PROTEIN"/>
    <property type="match status" value="1"/>
</dbReference>
<dbReference type="Pfam" id="PF00005">
    <property type="entry name" value="ABC_tran"/>
    <property type="match status" value="1"/>
</dbReference>
<dbReference type="SMART" id="SM00382">
    <property type="entry name" value="AAA"/>
    <property type="match status" value="1"/>
</dbReference>
<dbReference type="SUPFAM" id="SSF52540">
    <property type="entry name" value="P-loop containing nucleoside triphosphate hydrolases"/>
    <property type="match status" value="1"/>
</dbReference>
<dbReference type="PROSITE" id="PS50893">
    <property type="entry name" value="ABC_TRANSPORTER_2"/>
    <property type="match status" value="1"/>
</dbReference>